<reference key="1">
    <citation type="journal article" date="2000" name="Nature">
        <title>The complete sequence of the mucosal pathogen Ureaplasma urealyticum.</title>
        <authorList>
            <person name="Glass J.I."/>
            <person name="Lefkowitz E.J."/>
            <person name="Glass J.S."/>
            <person name="Heiner C.R."/>
            <person name="Chen E.Y."/>
            <person name="Cassell G.H."/>
        </authorList>
    </citation>
    <scope>NUCLEOTIDE SEQUENCE [LARGE SCALE GENOMIC DNA]</scope>
    <source>
        <strain>ATCC 700970</strain>
    </source>
</reference>
<evidence type="ECO:0000255" key="1">
    <source>
        <dbReference type="HAMAP-Rule" id="MF_00514"/>
    </source>
</evidence>
<evidence type="ECO:0000305" key="2"/>
<name>RL35_UREPA</name>
<dbReference type="EMBL" id="AF222894">
    <property type="protein sequence ID" value="AAF30637.1"/>
    <property type="molecule type" value="Genomic_DNA"/>
</dbReference>
<dbReference type="RefSeq" id="WP_006688895.1">
    <property type="nucleotide sequence ID" value="NC_002162.1"/>
</dbReference>
<dbReference type="SMR" id="Q9PQR3"/>
<dbReference type="STRING" id="273119.UU228"/>
<dbReference type="EnsemblBacteria" id="AAF30637">
    <property type="protein sequence ID" value="AAF30637"/>
    <property type="gene ID" value="UU228"/>
</dbReference>
<dbReference type="GeneID" id="29672671"/>
<dbReference type="KEGG" id="uur:UU228"/>
<dbReference type="eggNOG" id="COG0291">
    <property type="taxonomic scope" value="Bacteria"/>
</dbReference>
<dbReference type="HOGENOM" id="CLU_169643_3_0_14"/>
<dbReference type="OrthoDB" id="47476at2"/>
<dbReference type="Proteomes" id="UP000000423">
    <property type="component" value="Chromosome"/>
</dbReference>
<dbReference type="GO" id="GO:0022625">
    <property type="term" value="C:cytosolic large ribosomal subunit"/>
    <property type="evidence" value="ECO:0007669"/>
    <property type="project" value="TreeGrafter"/>
</dbReference>
<dbReference type="GO" id="GO:0003735">
    <property type="term" value="F:structural constituent of ribosome"/>
    <property type="evidence" value="ECO:0007669"/>
    <property type="project" value="InterPro"/>
</dbReference>
<dbReference type="GO" id="GO:0006412">
    <property type="term" value="P:translation"/>
    <property type="evidence" value="ECO:0007669"/>
    <property type="project" value="UniProtKB-UniRule"/>
</dbReference>
<dbReference type="FunFam" id="4.10.410.60:FF:000001">
    <property type="entry name" value="50S ribosomal protein L35"/>
    <property type="match status" value="1"/>
</dbReference>
<dbReference type="Gene3D" id="4.10.410.60">
    <property type="match status" value="1"/>
</dbReference>
<dbReference type="HAMAP" id="MF_00514">
    <property type="entry name" value="Ribosomal_bL35"/>
    <property type="match status" value="1"/>
</dbReference>
<dbReference type="InterPro" id="IPR001706">
    <property type="entry name" value="Ribosomal_bL35"/>
</dbReference>
<dbReference type="InterPro" id="IPR021137">
    <property type="entry name" value="Ribosomal_bL35-like"/>
</dbReference>
<dbReference type="InterPro" id="IPR018265">
    <property type="entry name" value="Ribosomal_bL35_CS"/>
</dbReference>
<dbReference type="InterPro" id="IPR037229">
    <property type="entry name" value="Ribosomal_bL35_sf"/>
</dbReference>
<dbReference type="NCBIfam" id="TIGR00001">
    <property type="entry name" value="rpmI_bact"/>
    <property type="match status" value="1"/>
</dbReference>
<dbReference type="PANTHER" id="PTHR33343">
    <property type="entry name" value="54S RIBOSOMAL PROTEIN BL35M"/>
    <property type="match status" value="1"/>
</dbReference>
<dbReference type="PANTHER" id="PTHR33343:SF1">
    <property type="entry name" value="LARGE RIBOSOMAL SUBUNIT PROTEIN BL35M"/>
    <property type="match status" value="1"/>
</dbReference>
<dbReference type="Pfam" id="PF01632">
    <property type="entry name" value="Ribosomal_L35p"/>
    <property type="match status" value="1"/>
</dbReference>
<dbReference type="PRINTS" id="PR00064">
    <property type="entry name" value="RIBOSOMALL35"/>
</dbReference>
<dbReference type="SUPFAM" id="SSF143034">
    <property type="entry name" value="L35p-like"/>
    <property type="match status" value="1"/>
</dbReference>
<dbReference type="PROSITE" id="PS00936">
    <property type="entry name" value="RIBOSOMAL_L35"/>
    <property type="match status" value="1"/>
</dbReference>
<comment type="similarity">
    <text evidence="1">Belongs to the bacterial ribosomal protein bL35 family.</text>
</comment>
<proteinExistence type="inferred from homology"/>
<organism>
    <name type="scientific">Ureaplasma parvum serovar 3 (strain ATCC 700970)</name>
    <dbReference type="NCBI Taxonomy" id="273119"/>
    <lineage>
        <taxon>Bacteria</taxon>
        <taxon>Bacillati</taxon>
        <taxon>Mycoplasmatota</taxon>
        <taxon>Mycoplasmoidales</taxon>
        <taxon>Mycoplasmoidaceae</taxon>
        <taxon>Ureaplasma</taxon>
    </lineage>
</organism>
<accession>Q9PQR3</accession>
<sequence length="64" mass="7471">MAKIRQKTKRAVAKRFSITKNGKLKRKHAYRSHLALGRSTKAKRHLRKDAIMSTSDTKRYTQCL</sequence>
<keyword id="KW-1185">Reference proteome</keyword>
<keyword id="KW-0687">Ribonucleoprotein</keyword>
<keyword id="KW-0689">Ribosomal protein</keyword>
<gene>
    <name evidence="1" type="primary">rpmI</name>
    <name evidence="1" type="synonym">rpl35</name>
    <name type="ordered locus">UU228</name>
</gene>
<protein>
    <recommendedName>
        <fullName evidence="1">Large ribosomal subunit protein bL35</fullName>
    </recommendedName>
    <alternativeName>
        <fullName evidence="2">50S ribosomal protein L35</fullName>
    </alternativeName>
</protein>
<feature type="chain" id="PRO_0000177450" description="Large ribosomal subunit protein bL35">
    <location>
        <begin position="1"/>
        <end position="64"/>
    </location>
</feature>